<proteinExistence type="inferred from homology"/>
<gene>
    <name evidence="1" type="primary">metK</name>
    <name type="ordered locus">BcerKBAB4_4594</name>
</gene>
<sequence>MTKKRHLFTSESVTEGHPDKICDQISDSILDAILAKDANARVACETTVTTGLVLVAGEITTSTYVDIPKIVRETIQGIGYTRAKYGFDAETCAVLTSIDEQSADIAMGVDQALEAREGQMTDAEIEAIGAGDQGLMFGFACNETQELMPLPISLAHKLARRLTEVRKDDTLSYLRPDGKTQVTVEYDENGKPVRVDTIVISTQHHPDVTWEEIDRDLKEHVIKAVVPAELMDGETKFFINPTGRFVIGGPQGDAGLTGRKIIVDTYGGYARHGGGAFSGKDATKVDRSAAYAARYVAKNIVAAGLADKAEVQLAYAIGVAQPVSISVDTLGTGKVSEDVLVELVRNNFDLRPAGIIKMLDLRRPIYKQTAAYGHFGRTDVDLTWERTDKAATLKEQAGL</sequence>
<dbReference type="EC" id="2.5.1.6" evidence="1"/>
<dbReference type="EMBL" id="CP000903">
    <property type="protein sequence ID" value="ABY45750.1"/>
    <property type="molecule type" value="Genomic_DNA"/>
</dbReference>
<dbReference type="RefSeq" id="WP_002015707.1">
    <property type="nucleotide sequence ID" value="NC_010184.1"/>
</dbReference>
<dbReference type="SMR" id="A9VLC6"/>
<dbReference type="KEGG" id="bwe:BcerKBAB4_4594"/>
<dbReference type="eggNOG" id="COG0192">
    <property type="taxonomic scope" value="Bacteria"/>
</dbReference>
<dbReference type="HOGENOM" id="CLU_041802_1_1_9"/>
<dbReference type="UniPathway" id="UPA00315">
    <property type="reaction ID" value="UER00080"/>
</dbReference>
<dbReference type="Proteomes" id="UP000002154">
    <property type="component" value="Chromosome"/>
</dbReference>
<dbReference type="GO" id="GO:0005737">
    <property type="term" value="C:cytoplasm"/>
    <property type="evidence" value="ECO:0007669"/>
    <property type="project" value="UniProtKB-SubCell"/>
</dbReference>
<dbReference type="GO" id="GO:0005524">
    <property type="term" value="F:ATP binding"/>
    <property type="evidence" value="ECO:0007669"/>
    <property type="project" value="UniProtKB-UniRule"/>
</dbReference>
<dbReference type="GO" id="GO:0000287">
    <property type="term" value="F:magnesium ion binding"/>
    <property type="evidence" value="ECO:0007669"/>
    <property type="project" value="UniProtKB-UniRule"/>
</dbReference>
<dbReference type="GO" id="GO:0004478">
    <property type="term" value="F:methionine adenosyltransferase activity"/>
    <property type="evidence" value="ECO:0007669"/>
    <property type="project" value="UniProtKB-UniRule"/>
</dbReference>
<dbReference type="GO" id="GO:0006730">
    <property type="term" value="P:one-carbon metabolic process"/>
    <property type="evidence" value="ECO:0007669"/>
    <property type="project" value="UniProtKB-KW"/>
</dbReference>
<dbReference type="GO" id="GO:0006556">
    <property type="term" value="P:S-adenosylmethionine biosynthetic process"/>
    <property type="evidence" value="ECO:0007669"/>
    <property type="project" value="UniProtKB-UniRule"/>
</dbReference>
<dbReference type="CDD" id="cd18079">
    <property type="entry name" value="S-AdoMet_synt"/>
    <property type="match status" value="1"/>
</dbReference>
<dbReference type="FunFam" id="3.30.300.10:FF:000003">
    <property type="entry name" value="S-adenosylmethionine synthase"/>
    <property type="match status" value="1"/>
</dbReference>
<dbReference type="FunFam" id="3.30.300.10:FF:000004">
    <property type="entry name" value="S-adenosylmethionine synthase"/>
    <property type="match status" value="1"/>
</dbReference>
<dbReference type="Gene3D" id="3.30.300.10">
    <property type="match status" value="3"/>
</dbReference>
<dbReference type="HAMAP" id="MF_00086">
    <property type="entry name" value="S_AdoMet_synth1"/>
    <property type="match status" value="1"/>
</dbReference>
<dbReference type="InterPro" id="IPR022631">
    <property type="entry name" value="ADOMET_SYNTHASE_CS"/>
</dbReference>
<dbReference type="InterPro" id="IPR022630">
    <property type="entry name" value="S-AdoMet_synt_C"/>
</dbReference>
<dbReference type="InterPro" id="IPR022629">
    <property type="entry name" value="S-AdoMet_synt_central"/>
</dbReference>
<dbReference type="InterPro" id="IPR022628">
    <property type="entry name" value="S-AdoMet_synt_N"/>
</dbReference>
<dbReference type="InterPro" id="IPR002133">
    <property type="entry name" value="S-AdoMet_synthetase"/>
</dbReference>
<dbReference type="InterPro" id="IPR022636">
    <property type="entry name" value="S-AdoMet_synthetase_sfam"/>
</dbReference>
<dbReference type="NCBIfam" id="TIGR01034">
    <property type="entry name" value="metK"/>
    <property type="match status" value="1"/>
</dbReference>
<dbReference type="PANTHER" id="PTHR11964">
    <property type="entry name" value="S-ADENOSYLMETHIONINE SYNTHETASE"/>
    <property type="match status" value="1"/>
</dbReference>
<dbReference type="Pfam" id="PF02773">
    <property type="entry name" value="S-AdoMet_synt_C"/>
    <property type="match status" value="1"/>
</dbReference>
<dbReference type="Pfam" id="PF02772">
    <property type="entry name" value="S-AdoMet_synt_M"/>
    <property type="match status" value="1"/>
</dbReference>
<dbReference type="Pfam" id="PF00438">
    <property type="entry name" value="S-AdoMet_synt_N"/>
    <property type="match status" value="1"/>
</dbReference>
<dbReference type="PIRSF" id="PIRSF000497">
    <property type="entry name" value="MAT"/>
    <property type="match status" value="1"/>
</dbReference>
<dbReference type="SUPFAM" id="SSF55973">
    <property type="entry name" value="S-adenosylmethionine synthetase"/>
    <property type="match status" value="3"/>
</dbReference>
<dbReference type="PROSITE" id="PS00376">
    <property type="entry name" value="ADOMET_SYNTHASE_1"/>
    <property type="match status" value="1"/>
</dbReference>
<dbReference type="PROSITE" id="PS00377">
    <property type="entry name" value="ADOMET_SYNTHASE_2"/>
    <property type="match status" value="1"/>
</dbReference>
<evidence type="ECO:0000255" key="1">
    <source>
        <dbReference type="HAMAP-Rule" id="MF_00086"/>
    </source>
</evidence>
<comment type="function">
    <text evidence="1">Catalyzes the formation of S-adenosylmethionine (AdoMet) from methionine and ATP. The overall synthetic reaction is composed of two sequential steps, AdoMet formation and the subsequent tripolyphosphate hydrolysis which occurs prior to release of AdoMet from the enzyme.</text>
</comment>
<comment type="catalytic activity">
    <reaction evidence="1">
        <text>L-methionine + ATP + H2O = S-adenosyl-L-methionine + phosphate + diphosphate</text>
        <dbReference type="Rhea" id="RHEA:21080"/>
        <dbReference type="ChEBI" id="CHEBI:15377"/>
        <dbReference type="ChEBI" id="CHEBI:30616"/>
        <dbReference type="ChEBI" id="CHEBI:33019"/>
        <dbReference type="ChEBI" id="CHEBI:43474"/>
        <dbReference type="ChEBI" id="CHEBI:57844"/>
        <dbReference type="ChEBI" id="CHEBI:59789"/>
        <dbReference type="EC" id="2.5.1.6"/>
    </reaction>
</comment>
<comment type="cofactor">
    <cofactor evidence="1">
        <name>Mg(2+)</name>
        <dbReference type="ChEBI" id="CHEBI:18420"/>
    </cofactor>
    <text evidence="1">Binds 2 divalent ions per subunit.</text>
</comment>
<comment type="cofactor">
    <cofactor evidence="1">
        <name>K(+)</name>
        <dbReference type="ChEBI" id="CHEBI:29103"/>
    </cofactor>
    <text evidence="1">Binds 1 potassium ion per subunit.</text>
</comment>
<comment type="pathway">
    <text evidence="1">Amino-acid biosynthesis; S-adenosyl-L-methionine biosynthesis; S-adenosyl-L-methionine from L-methionine: step 1/1.</text>
</comment>
<comment type="subunit">
    <text evidence="1">Homotetramer; dimer of dimers.</text>
</comment>
<comment type="subcellular location">
    <subcellularLocation>
        <location evidence="1">Cytoplasm</location>
    </subcellularLocation>
</comment>
<comment type="similarity">
    <text evidence="1">Belongs to the AdoMet synthase family.</text>
</comment>
<reference key="1">
    <citation type="journal article" date="2008" name="Chem. Biol. Interact.">
        <title>Extending the Bacillus cereus group genomics to putative food-borne pathogens of different toxicity.</title>
        <authorList>
            <person name="Lapidus A."/>
            <person name="Goltsman E."/>
            <person name="Auger S."/>
            <person name="Galleron N."/>
            <person name="Segurens B."/>
            <person name="Dossat C."/>
            <person name="Land M.L."/>
            <person name="Broussolle V."/>
            <person name="Brillard J."/>
            <person name="Guinebretiere M.-H."/>
            <person name="Sanchis V."/>
            <person name="Nguen-the C."/>
            <person name="Lereclus D."/>
            <person name="Richardson P."/>
            <person name="Wincker P."/>
            <person name="Weissenbach J."/>
            <person name="Ehrlich S.D."/>
            <person name="Sorokin A."/>
        </authorList>
    </citation>
    <scope>NUCLEOTIDE SEQUENCE [LARGE SCALE GENOMIC DNA]</scope>
    <source>
        <strain>KBAB4</strain>
    </source>
</reference>
<protein>
    <recommendedName>
        <fullName evidence="1">S-adenosylmethionine synthase</fullName>
        <shortName evidence="1">AdoMet synthase</shortName>
        <ecNumber evidence="1">2.5.1.6</ecNumber>
    </recommendedName>
    <alternativeName>
        <fullName evidence="1">MAT</fullName>
    </alternativeName>
    <alternativeName>
        <fullName evidence="1">Methionine adenosyltransferase</fullName>
    </alternativeName>
</protein>
<name>METK_BACMK</name>
<organism>
    <name type="scientific">Bacillus mycoides (strain KBAB4)</name>
    <name type="common">Bacillus weihenstephanensis</name>
    <dbReference type="NCBI Taxonomy" id="315730"/>
    <lineage>
        <taxon>Bacteria</taxon>
        <taxon>Bacillati</taxon>
        <taxon>Bacillota</taxon>
        <taxon>Bacilli</taxon>
        <taxon>Bacillales</taxon>
        <taxon>Bacillaceae</taxon>
        <taxon>Bacillus</taxon>
        <taxon>Bacillus cereus group</taxon>
    </lineage>
</organism>
<accession>A9VLC6</accession>
<feature type="chain" id="PRO_1000093025" description="S-adenosylmethionine synthase">
    <location>
        <begin position="1"/>
        <end position="399"/>
    </location>
</feature>
<feature type="region of interest" description="Flexible loop" evidence="1">
    <location>
        <begin position="101"/>
        <end position="111"/>
    </location>
</feature>
<feature type="binding site" description="in other chain" evidence="1">
    <location>
        <position position="17"/>
    </location>
    <ligand>
        <name>ATP</name>
        <dbReference type="ChEBI" id="CHEBI:30616"/>
        <note>ligand shared between two neighboring subunits</note>
    </ligand>
</feature>
<feature type="binding site" evidence="1">
    <location>
        <position position="19"/>
    </location>
    <ligand>
        <name>Mg(2+)</name>
        <dbReference type="ChEBI" id="CHEBI:18420"/>
    </ligand>
</feature>
<feature type="binding site" evidence="1">
    <location>
        <position position="45"/>
    </location>
    <ligand>
        <name>K(+)</name>
        <dbReference type="ChEBI" id="CHEBI:29103"/>
    </ligand>
</feature>
<feature type="binding site" description="in other chain" evidence="1">
    <location>
        <position position="58"/>
    </location>
    <ligand>
        <name>L-methionine</name>
        <dbReference type="ChEBI" id="CHEBI:57844"/>
        <note>ligand shared between two neighboring subunits</note>
    </ligand>
</feature>
<feature type="binding site" description="in other chain" evidence="1">
    <location>
        <position position="101"/>
    </location>
    <ligand>
        <name>L-methionine</name>
        <dbReference type="ChEBI" id="CHEBI:57844"/>
        <note>ligand shared between two neighboring subunits</note>
    </ligand>
</feature>
<feature type="binding site" description="in other chain" evidence="1">
    <location>
        <begin position="177"/>
        <end position="179"/>
    </location>
    <ligand>
        <name>ATP</name>
        <dbReference type="ChEBI" id="CHEBI:30616"/>
        <note>ligand shared between two neighboring subunits</note>
    </ligand>
</feature>
<feature type="binding site" description="in other chain" evidence="1">
    <location>
        <begin position="244"/>
        <end position="245"/>
    </location>
    <ligand>
        <name>ATP</name>
        <dbReference type="ChEBI" id="CHEBI:30616"/>
        <note>ligand shared between two neighboring subunits</note>
    </ligand>
</feature>
<feature type="binding site" evidence="1">
    <location>
        <position position="253"/>
    </location>
    <ligand>
        <name>ATP</name>
        <dbReference type="ChEBI" id="CHEBI:30616"/>
        <note>ligand shared between two neighboring subunits</note>
    </ligand>
</feature>
<feature type="binding site" evidence="1">
    <location>
        <position position="253"/>
    </location>
    <ligand>
        <name>L-methionine</name>
        <dbReference type="ChEBI" id="CHEBI:57844"/>
        <note>ligand shared between two neighboring subunits</note>
    </ligand>
</feature>
<feature type="binding site" description="in other chain" evidence="1">
    <location>
        <begin position="259"/>
        <end position="260"/>
    </location>
    <ligand>
        <name>ATP</name>
        <dbReference type="ChEBI" id="CHEBI:30616"/>
        <note>ligand shared between two neighboring subunits</note>
    </ligand>
</feature>
<feature type="binding site" evidence="1">
    <location>
        <position position="276"/>
    </location>
    <ligand>
        <name>ATP</name>
        <dbReference type="ChEBI" id="CHEBI:30616"/>
        <note>ligand shared between two neighboring subunits</note>
    </ligand>
</feature>
<feature type="binding site" evidence="1">
    <location>
        <position position="280"/>
    </location>
    <ligand>
        <name>ATP</name>
        <dbReference type="ChEBI" id="CHEBI:30616"/>
        <note>ligand shared between two neighboring subunits</note>
    </ligand>
</feature>
<feature type="binding site" description="in other chain" evidence="1">
    <location>
        <position position="284"/>
    </location>
    <ligand>
        <name>L-methionine</name>
        <dbReference type="ChEBI" id="CHEBI:57844"/>
        <note>ligand shared between two neighboring subunits</note>
    </ligand>
</feature>
<keyword id="KW-0067">ATP-binding</keyword>
<keyword id="KW-0963">Cytoplasm</keyword>
<keyword id="KW-0460">Magnesium</keyword>
<keyword id="KW-0479">Metal-binding</keyword>
<keyword id="KW-0547">Nucleotide-binding</keyword>
<keyword id="KW-0554">One-carbon metabolism</keyword>
<keyword id="KW-0630">Potassium</keyword>
<keyword id="KW-0808">Transferase</keyword>